<evidence type="ECO:0000255" key="1">
    <source>
        <dbReference type="HAMAP-Rule" id="MF_00203"/>
    </source>
</evidence>
<keyword id="KW-0963">Cytoplasm</keyword>
<keyword id="KW-0227">DNA damage</keyword>
<keyword id="KW-0228">DNA excision</keyword>
<keyword id="KW-0234">DNA repair</keyword>
<keyword id="KW-0267">Excision nuclease</keyword>
<keyword id="KW-1185">Reference proteome</keyword>
<keyword id="KW-0742">SOS response</keyword>
<accession>Q7M8K0</accession>
<sequence length="602" mass="69423">MQSETLLETLQNLPDQSGVYHYFDSRSKLLYVGKAKSLKKRVKSYFQFTPTLAPSPKLSPRIHKMISEAAFIRYIVVENEHDALILENSLIKQLKPKYNILLRDDKTYPYIYFDENESFPRLEITRKILPHKGVRYFGPYTTGARELLESLYELLPLVQKKGCLKAQKACLFYQIHRCLAPCESKISKERYGEIFKEALGLLQNHSKLISRLKERMEKLAENLRFEEAGELRDRIEKIKRIEAFSGIDLARLEDLDILAIATSGKHSMLTRLFMREGKVVSSTSTPLKAQEGLDEEEAYRRAILHYYDSFMPLPPKQILLPLELESKRELEAHLEGLFGRKIPLHHPKQGSKKALIDLALKNAEELLRLEGEKEEIPLLESLQELLGLESLPRRIEAFDTSHLRGEACVGAMVVYEEGFCKESYRRYALEGRDEYSQMREMLGRRAEAFDRESPPDLWLLDGGLGQIRLAQEIIESLGANVEIIAIAKEKIDAKAHRAKGAAKDILRTPTEEIRLLPSDKRLQLLQKIRDEVHRFAITYHRQQKLKKDRQIDLLEIKGIKKGKLKRLLDFFGSFEAIREASFEELCKVVSEGEARAILEASF</sequence>
<protein>
    <recommendedName>
        <fullName evidence="1">UvrABC system protein C</fullName>
        <shortName evidence="1">Protein UvrC</shortName>
    </recommendedName>
    <alternativeName>
        <fullName evidence="1">Excinuclease ABC subunit C</fullName>
    </alternativeName>
</protein>
<proteinExistence type="inferred from homology"/>
<organism>
    <name type="scientific">Wolinella succinogenes (strain ATCC 29543 / DSM 1740 / CCUG 13145 / JCM 31913 / LMG 7466 / NCTC 11488 / FDC 602W)</name>
    <name type="common">Vibrio succinogenes</name>
    <dbReference type="NCBI Taxonomy" id="273121"/>
    <lineage>
        <taxon>Bacteria</taxon>
        <taxon>Pseudomonadati</taxon>
        <taxon>Campylobacterota</taxon>
        <taxon>Epsilonproteobacteria</taxon>
        <taxon>Campylobacterales</taxon>
        <taxon>Helicobacteraceae</taxon>
        <taxon>Wolinella</taxon>
    </lineage>
</organism>
<reference key="1">
    <citation type="journal article" date="2003" name="Proc. Natl. Acad. Sci. U.S.A.">
        <title>Complete genome sequence and analysis of Wolinella succinogenes.</title>
        <authorList>
            <person name="Baar C."/>
            <person name="Eppinger M."/>
            <person name="Raddatz G."/>
            <person name="Simon J."/>
            <person name="Lanz C."/>
            <person name="Klimmek O."/>
            <person name="Nandakumar R."/>
            <person name="Gross R."/>
            <person name="Rosinus A."/>
            <person name="Keller H."/>
            <person name="Jagtap P."/>
            <person name="Linke B."/>
            <person name="Meyer F."/>
            <person name="Lederer H."/>
            <person name="Schuster S.C."/>
        </authorList>
    </citation>
    <scope>NUCLEOTIDE SEQUENCE [LARGE SCALE GENOMIC DNA]</scope>
    <source>
        <strain>ATCC 29543 / DSM 1740 / CCUG 13145 / JCM 31913 / LMG 7466 / NCTC 11488 / FDC 602W</strain>
    </source>
</reference>
<gene>
    <name evidence="1" type="primary">uvrC</name>
    <name type="ordered locus">WS1607</name>
</gene>
<dbReference type="EMBL" id="BX571661">
    <property type="protein sequence ID" value="CAE10642.1"/>
    <property type="molecule type" value="Genomic_DNA"/>
</dbReference>
<dbReference type="RefSeq" id="WP_011139426.1">
    <property type="nucleotide sequence ID" value="NC_005090.1"/>
</dbReference>
<dbReference type="SMR" id="Q7M8K0"/>
<dbReference type="STRING" id="273121.WS1607"/>
<dbReference type="KEGG" id="wsu:WS1607"/>
<dbReference type="eggNOG" id="COG0322">
    <property type="taxonomic scope" value="Bacteria"/>
</dbReference>
<dbReference type="HOGENOM" id="CLU_014841_3_2_7"/>
<dbReference type="Proteomes" id="UP000000422">
    <property type="component" value="Chromosome"/>
</dbReference>
<dbReference type="GO" id="GO:0005737">
    <property type="term" value="C:cytoplasm"/>
    <property type="evidence" value="ECO:0007669"/>
    <property type="project" value="UniProtKB-SubCell"/>
</dbReference>
<dbReference type="GO" id="GO:0009380">
    <property type="term" value="C:excinuclease repair complex"/>
    <property type="evidence" value="ECO:0007669"/>
    <property type="project" value="InterPro"/>
</dbReference>
<dbReference type="GO" id="GO:0003677">
    <property type="term" value="F:DNA binding"/>
    <property type="evidence" value="ECO:0007669"/>
    <property type="project" value="UniProtKB-UniRule"/>
</dbReference>
<dbReference type="GO" id="GO:0009381">
    <property type="term" value="F:excinuclease ABC activity"/>
    <property type="evidence" value="ECO:0007669"/>
    <property type="project" value="UniProtKB-UniRule"/>
</dbReference>
<dbReference type="GO" id="GO:0006289">
    <property type="term" value="P:nucleotide-excision repair"/>
    <property type="evidence" value="ECO:0007669"/>
    <property type="project" value="UniProtKB-UniRule"/>
</dbReference>
<dbReference type="GO" id="GO:0009432">
    <property type="term" value="P:SOS response"/>
    <property type="evidence" value="ECO:0007669"/>
    <property type="project" value="UniProtKB-UniRule"/>
</dbReference>
<dbReference type="CDD" id="cd10434">
    <property type="entry name" value="GIY-YIG_UvrC_Cho"/>
    <property type="match status" value="1"/>
</dbReference>
<dbReference type="FunFam" id="3.40.1440.10:FF:000001">
    <property type="entry name" value="UvrABC system protein C"/>
    <property type="match status" value="1"/>
</dbReference>
<dbReference type="Gene3D" id="1.10.150.20">
    <property type="entry name" value="5' to 3' exonuclease, C-terminal subdomain"/>
    <property type="match status" value="1"/>
</dbReference>
<dbReference type="Gene3D" id="3.40.1440.10">
    <property type="entry name" value="GIY-YIG endonuclease"/>
    <property type="match status" value="1"/>
</dbReference>
<dbReference type="Gene3D" id="4.10.860.10">
    <property type="entry name" value="UVR domain"/>
    <property type="match status" value="1"/>
</dbReference>
<dbReference type="Gene3D" id="3.30.420.340">
    <property type="entry name" value="UvrC, RNAse H endonuclease domain"/>
    <property type="match status" value="1"/>
</dbReference>
<dbReference type="HAMAP" id="MF_00203">
    <property type="entry name" value="UvrC"/>
    <property type="match status" value="1"/>
</dbReference>
<dbReference type="InterPro" id="IPR000305">
    <property type="entry name" value="GIY-YIG_endonuc"/>
</dbReference>
<dbReference type="InterPro" id="IPR035901">
    <property type="entry name" value="GIY-YIG_endonuc_sf"/>
</dbReference>
<dbReference type="InterPro" id="IPR047296">
    <property type="entry name" value="GIY-YIG_UvrC_Cho"/>
</dbReference>
<dbReference type="InterPro" id="IPR010994">
    <property type="entry name" value="RuvA_2-like"/>
</dbReference>
<dbReference type="InterPro" id="IPR001943">
    <property type="entry name" value="UVR_dom"/>
</dbReference>
<dbReference type="InterPro" id="IPR036876">
    <property type="entry name" value="UVR_dom_sf"/>
</dbReference>
<dbReference type="InterPro" id="IPR050066">
    <property type="entry name" value="UvrABC_protein_C"/>
</dbReference>
<dbReference type="InterPro" id="IPR004791">
    <property type="entry name" value="UvrC"/>
</dbReference>
<dbReference type="InterPro" id="IPR001162">
    <property type="entry name" value="UvrC_RNase_H_dom"/>
</dbReference>
<dbReference type="InterPro" id="IPR038476">
    <property type="entry name" value="UvrC_RNase_H_dom_sf"/>
</dbReference>
<dbReference type="NCBIfam" id="TIGR00194">
    <property type="entry name" value="uvrC"/>
    <property type="match status" value="1"/>
</dbReference>
<dbReference type="PANTHER" id="PTHR30562:SF1">
    <property type="entry name" value="UVRABC SYSTEM PROTEIN C"/>
    <property type="match status" value="1"/>
</dbReference>
<dbReference type="PANTHER" id="PTHR30562">
    <property type="entry name" value="UVRC/OXIDOREDUCTASE"/>
    <property type="match status" value="1"/>
</dbReference>
<dbReference type="Pfam" id="PF01541">
    <property type="entry name" value="GIY-YIG"/>
    <property type="match status" value="1"/>
</dbReference>
<dbReference type="Pfam" id="PF02151">
    <property type="entry name" value="UVR"/>
    <property type="match status" value="1"/>
</dbReference>
<dbReference type="Pfam" id="PF22920">
    <property type="entry name" value="UvrC_RNaseH"/>
    <property type="match status" value="1"/>
</dbReference>
<dbReference type="Pfam" id="PF08459">
    <property type="entry name" value="UvrC_RNaseH_dom"/>
    <property type="match status" value="1"/>
</dbReference>
<dbReference type="SMART" id="SM00465">
    <property type="entry name" value="GIYc"/>
    <property type="match status" value="1"/>
</dbReference>
<dbReference type="SUPFAM" id="SSF46600">
    <property type="entry name" value="C-terminal UvrC-binding domain of UvrB"/>
    <property type="match status" value="1"/>
</dbReference>
<dbReference type="SUPFAM" id="SSF82771">
    <property type="entry name" value="GIY-YIG endonuclease"/>
    <property type="match status" value="1"/>
</dbReference>
<dbReference type="SUPFAM" id="SSF47781">
    <property type="entry name" value="RuvA domain 2-like"/>
    <property type="match status" value="1"/>
</dbReference>
<dbReference type="PROSITE" id="PS50164">
    <property type="entry name" value="GIY_YIG"/>
    <property type="match status" value="1"/>
</dbReference>
<dbReference type="PROSITE" id="PS50151">
    <property type="entry name" value="UVR"/>
    <property type="match status" value="1"/>
</dbReference>
<dbReference type="PROSITE" id="PS50165">
    <property type="entry name" value="UVRC"/>
    <property type="match status" value="1"/>
</dbReference>
<feature type="chain" id="PRO_0000227492" description="UvrABC system protein C">
    <location>
        <begin position="1"/>
        <end position="602"/>
    </location>
</feature>
<feature type="domain" description="GIY-YIG" evidence="1">
    <location>
        <begin position="15"/>
        <end position="100"/>
    </location>
</feature>
<feature type="domain" description="UVR" evidence="1">
    <location>
        <begin position="206"/>
        <end position="241"/>
    </location>
</feature>
<name>UVRC_WOLSU</name>
<comment type="function">
    <text evidence="1">The UvrABC repair system catalyzes the recognition and processing of DNA lesions. UvrC both incises the 5' and 3' sides of the lesion. The N-terminal half is responsible for the 3' incision and the C-terminal half is responsible for the 5' incision.</text>
</comment>
<comment type="subunit">
    <text evidence="1">Interacts with UvrB in an incision complex.</text>
</comment>
<comment type="subcellular location">
    <subcellularLocation>
        <location evidence="1">Cytoplasm</location>
    </subcellularLocation>
</comment>
<comment type="similarity">
    <text evidence="1">Belongs to the UvrC family.</text>
</comment>